<gene>
    <name evidence="1" type="primary">gatC</name>
    <name type="ordered locus">Paes_1869</name>
</gene>
<reference key="1">
    <citation type="submission" date="2008-06" db="EMBL/GenBank/DDBJ databases">
        <title>Complete sequence of chromosome of Prosthecochloris aestuarii DSM 271.</title>
        <authorList>
            <consortium name="US DOE Joint Genome Institute"/>
            <person name="Lucas S."/>
            <person name="Copeland A."/>
            <person name="Lapidus A."/>
            <person name="Glavina del Rio T."/>
            <person name="Dalin E."/>
            <person name="Tice H."/>
            <person name="Bruce D."/>
            <person name="Goodwin L."/>
            <person name="Pitluck S."/>
            <person name="Schmutz J."/>
            <person name="Larimer F."/>
            <person name="Land M."/>
            <person name="Hauser L."/>
            <person name="Kyrpides N."/>
            <person name="Anderson I."/>
            <person name="Liu Z."/>
            <person name="Li T."/>
            <person name="Zhao F."/>
            <person name="Overmann J."/>
            <person name="Bryant D.A."/>
            <person name="Richardson P."/>
        </authorList>
    </citation>
    <scope>NUCLEOTIDE SEQUENCE [LARGE SCALE GENOMIC DNA]</scope>
    <source>
        <strain>DSM 271 / SK 413</strain>
    </source>
</reference>
<name>GATC_PROA2</name>
<protein>
    <recommendedName>
        <fullName evidence="1">Aspartyl/glutamyl-tRNA(Asn/Gln) amidotransferase subunit C</fullName>
        <shortName evidence="1">Asp/Glu-ADT subunit C</shortName>
        <ecNumber evidence="1">6.3.5.-</ecNumber>
    </recommendedName>
</protein>
<proteinExistence type="inferred from homology"/>
<accession>B4S4I5</accession>
<feature type="chain" id="PRO_1000095306" description="Aspartyl/glutamyl-tRNA(Asn/Gln) amidotransferase subunit C">
    <location>
        <begin position="1"/>
        <end position="95"/>
    </location>
</feature>
<comment type="function">
    <text evidence="1">Allows the formation of correctly charged Asn-tRNA(Asn) or Gln-tRNA(Gln) through the transamidation of misacylated Asp-tRNA(Asn) or Glu-tRNA(Gln) in organisms which lack either or both of asparaginyl-tRNA or glutaminyl-tRNA synthetases. The reaction takes place in the presence of glutamine and ATP through an activated phospho-Asp-tRNA(Asn) or phospho-Glu-tRNA(Gln).</text>
</comment>
<comment type="catalytic activity">
    <reaction evidence="1">
        <text>L-glutamyl-tRNA(Gln) + L-glutamine + ATP + H2O = L-glutaminyl-tRNA(Gln) + L-glutamate + ADP + phosphate + H(+)</text>
        <dbReference type="Rhea" id="RHEA:17521"/>
        <dbReference type="Rhea" id="RHEA-COMP:9681"/>
        <dbReference type="Rhea" id="RHEA-COMP:9684"/>
        <dbReference type="ChEBI" id="CHEBI:15377"/>
        <dbReference type="ChEBI" id="CHEBI:15378"/>
        <dbReference type="ChEBI" id="CHEBI:29985"/>
        <dbReference type="ChEBI" id="CHEBI:30616"/>
        <dbReference type="ChEBI" id="CHEBI:43474"/>
        <dbReference type="ChEBI" id="CHEBI:58359"/>
        <dbReference type="ChEBI" id="CHEBI:78520"/>
        <dbReference type="ChEBI" id="CHEBI:78521"/>
        <dbReference type="ChEBI" id="CHEBI:456216"/>
    </reaction>
</comment>
<comment type="catalytic activity">
    <reaction evidence="1">
        <text>L-aspartyl-tRNA(Asn) + L-glutamine + ATP + H2O = L-asparaginyl-tRNA(Asn) + L-glutamate + ADP + phosphate + 2 H(+)</text>
        <dbReference type="Rhea" id="RHEA:14513"/>
        <dbReference type="Rhea" id="RHEA-COMP:9674"/>
        <dbReference type="Rhea" id="RHEA-COMP:9677"/>
        <dbReference type="ChEBI" id="CHEBI:15377"/>
        <dbReference type="ChEBI" id="CHEBI:15378"/>
        <dbReference type="ChEBI" id="CHEBI:29985"/>
        <dbReference type="ChEBI" id="CHEBI:30616"/>
        <dbReference type="ChEBI" id="CHEBI:43474"/>
        <dbReference type="ChEBI" id="CHEBI:58359"/>
        <dbReference type="ChEBI" id="CHEBI:78515"/>
        <dbReference type="ChEBI" id="CHEBI:78516"/>
        <dbReference type="ChEBI" id="CHEBI:456216"/>
    </reaction>
</comment>
<comment type="subunit">
    <text evidence="1">Heterotrimer of A, B and C subunits.</text>
</comment>
<comment type="similarity">
    <text evidence="1">Belongs to the GatC family.</text>
</comment>
<dbReference type="EC" id="6.3.5.-" evidence="1"/>
<dbReference type="EMBL" id="CP001108">
    <property type="protein sequence ID" value="ACF46881.1"/>
    <property type="molecule type" value="Genomic_DNA"/>
</dbReference>
<dbReference type="RefSeq" id="WP_012506414.1">
    <property type="nucleotide sequence ID" value="NC_011059.1"/>
</dbReference>
<dbReference type="SMR" id="B4S4I5"/>
<dbReference type="STRING" id="290512.Paes_1869"/>
<dbReference type="KEGG" id="paa:Paes_1869"/>
<dbReference type="eggNOG" id="COG0721">
    <property type="taxonomic scope" value="Bacteria"/>
</dbReference>
<dbReference type="HOGENOM" id="CLU_105899_1_2_10"/>
<dbReference type="Proteomes" id="UP000002725">
    <property type="component" value="Chromosome"/>
</dbReference>
<dbReference type="GO" id="GO:0050566">
    <property type="term" value="F:asparaginyl-tRNA synthase (glutamine-hydrolyzing) activity"/>
    <property type="evidence" value="ECO:0007669"/>
    <property type="project" value="RHEA"/>
</dbReference>
<dbReference type="GO" id="GO:0005524">
    <property type="term" value="F:ATP binding"/>
    <property type="evidence" value="ECO:0007669"/>
    <property type="project" value="UniProtKB-KW"/>
</dbReference>
<dbReference type="GO" id="GO:0050567">
    <property type="term" value="F:glutaminyl-tRNA synthase (glutamine-hydrolyzing) activity"/>
    <property type="evidence" value="ECO:0007669"/>
    <property type="project" value="UniProtKB-UniRule"/>
</dbReference>
<dbReference type="GO" id="GO:0070681">
    <property type="term" value="P:glutaminyl-tRNAGln biosynthesis via transamidation"/>
    <property type="evidence" value="ECO:0007669"/>
    <property type="project" value="TreeGrafter"/>
</dbReference>
<dbReference type="GO" id="GO:0006450">
    <property type="term" value="P:regulation of translational fidelity"/>
    <property type="evidence" value="ECO:0007669"/>
    <property type="project" value="InterPro"/>
</dbReference>
<dbReference type="GO" id="GO:0006412">
    <property type="term" value="P:translation"/>
    <property type="evidence" value="ECO:0007669"/>
    <property type="project" value="UniProtKB-UniRule"/>
</dbReference>
<dbReference type="Gene3D" id="1.10.20.60">
    <property type="entry name" value="Glu-tRNAGln amidotransferase C subunit, N-terminal domain"/>
    <property type="match status" value="1"/>
</dbReference>
<dbReference type="HAMAP" id="MF_00122">
    <property type="entry name" value="GatC"/>
    <property type="match status" value="1"/>
</dbReference>
<dbReference type="InterPro" id="IPR036113">
    <property type="entry name" value="Asp/Glu-ADT_sf_sub_c"/>
</dbReference>
<dbReference type="InterPro" id="IPR003837">
    <property type="entry name" value="GatC"/>
</dbReference>
<dbReference type="NCBIfam" id="TIGR00135">
    <property type="entry name" value="gatC"/>
    <property type="match status" value="1"/>
</dbReference>
<dbReference type="PANTHER" id="PTHR15004">
    <property type="entry name" value="GLUTAMYL-TRNA(GLN) AMIDOTRANSFERASE SUBUNIT C, MITOCHONDRIAL"/>
    <property type="match status" value="1"/>
</dbReference>
<dbReference type="PANTHER" id="PTHR15004:SF0">
    <property type="entry name" value="GLUTAMYL-TRNA(GLN) AMIDOTRANSFERASE SUBUNIT C, MITOCHONDRIAL"/>
    <property type="match status" value="1"/>
</dbReference>
<dbReference type="Pfam" id="PF02686">
    <property type="entry name" value="GatC"/>
    <property type="match status" value="1"/>
</dbReference>
<dbReference type="SUPFAM" id="SSF141000">
    <property type="entry name" value="Glu-tRNAGln amidotransferase C subunit"/>
    <property type="match status" value="1"/>
</dbReference>
<sequence>MSVTKKDVAYIAELAKLRFTEAEQEKMTTELNAILHYVDKLNEVDTDGVEPLSSIHDQVNVLREDCLKPSLDNEEALKNAPDRQERFFRVPKVIG</sequence>
<keyword id="KW-0067">ATP-binding</keyword>
<keyword id="KW-0436">Ligase</keyword>
<keyword id="KW-0547">Nucleotide-binding</keyword>
<keyword id="KW-0648">Protein biosynthesis</keyword>
<organism>
    <name type="scientific">Prosthecochloris aestuarii (strain DSM 271 / SK 413)</name>
    <dbReference type="NCBI Taxonomy" id="290512"/>
    <lineage>
        <taxon>Bacteria</taxon>
        <taxon>Pseudomonadati</taxon>
        <taxon>Chlorobiota</taxon>
        <taxon>Chlorobiia</taxon>
        <taxon>Chlorobiales</taxon>
        <taxon>Chlorobiaceae</taxon>
        <taxon>Prosthecochloris</taxon>
    </lineage>
</organism>
<evidence type="ECO:0000255" key="1">
    <source>
        <dbReference type="HAMAP-Rule" id="MF_00122"/>
    </source>
</evidence>